<comment type="function">
    <text evidence="1">One of the components of the core complex of photosystem II (PSII). PSII is a light-driven water:plastoquinone oxidoreductase that uses light energy to abstract electrons from H(2)O, generating O(2) and a proton gradient subsequently used for ATP formation. It consists of a core antenna complex that captures photons, and an electron transfer chain that converts photonic excitation into a charge separation. This subunit is found at the monomer-monomer interface and is required for correct PSII assembly and/or dimerization.</text>
</comment>
<comment type="subunit">
    <text evidence="1">PSII is composed of 1 copy each of membrane proteins PsbA, PsbB, PsbC, PsbD, PsbE, PsbF, PsbH, PsbI, PsbJ, PsbK, PsbL, PsbM, PsbT, PsbX, PsbY, PsbZ, Psb30/Ycf12, at least 3 peripheral proteins of the oxygen-evolving complex and a large number of cofactors. It forms dimeric complexes.</text>
</comment>
<comment type="subcellular location">
    <subcellularLocation>
        <location evidence="1">Plastid</location>
        <location evidence="1">Chloroplast thylakoid membrane</location>
        <topology evidence="1">Single-pass membrane protein</topology>
    </subcellularLocation>
</comment>
<comment type="similarity">
    <text evidence="1">Belongs to the PsbL family.</text>
</comment>
<accession>P46306</accession>
<gene>
    <name evidence="1" type="primary">psbL</name>
</gene>
<geneLocation type="chloroplast"/>
<feature type="chain" id="PRO_0000219696" description="Photosystem II reaction center protein L">
    <location>
        <begin position="1"/>
        <end position="38"/>
    </location>
</feature>
<feature type="transmembrane region" description="Helical" evidence="1">
    <location>
        <begin position="17"/>
        <end position="37"/>
    </location>
</feature>
<reference key="1">
    <citation type="journal article" date="1994" name="Curr. Genet.">
        <title>The chloroplast gene cluster containing psbF, psbL, petG and rps3 is conserved in Chlamydomonas.</title>
        <authorList>
            <person name="Turmel M."/>
            <person name="Otis C."/>
        </authorList>
    </citation>
    <scope>NUCLEOTIDE SEQUENCE [GENOMIC DNA]</scope>
</reference>
<proteinExistence type="inferred from homology"/>
<dbReference type="EMBL" id="L29282">
    <property type="protein sequence ID" value="AAA84157.1"/>
    <property type="molecule type" value="Genomic_DNA"/>
</dbReference>
<dbReference type="PIR" id="S51366">
    <property type="entry name" value="S51366"/>
</dbReference>
<dbReference type="SMR" id="P46306"/>
<dbReference type="GO" id="GO:0009535">
    <property type="term" value="C:chloroplast thylakoid membrane"/>
    <property type="evidence" value="ECO:0007669"/>
    <property type="project" value="UniProtKB-SubCell"/>
</dbReference>
<dbReference type="GO" id="GO:0009539">
    <property type="term" value="C:photosystem II reaction center"/>
    <property type="evidence" value="ECO:0007669"/>
    <property type="project" value="InterPro"/>
</dbReference>
<dbReference type="GO" id="GO:0015979">
    <property type="term" value="P:photosynthesis"/>
    <property type="evidence" value="ECO:0007669"/>
    <property type="project" value="UniProtKB-UniRule"/>
</dbReference>
<dbReference type="HAMAP" id="MF_01317">
    <property type="entry name" value="PSII_PsbL"/>
    <property type="match status" value="1"/>
</dbReference>
<dbReference type="InterPro" id="IPR003372">
    <property type="entry name" value="PSII_PsbL"/>
</dbReference>
<dbReference type="InterPro" id="IPR037266">
    <property type="entry name" value="PSII_PsbL_sf"/>
</dbReference>
<dbReference type="NCBIfam" id="NF001972">
    <property type="entry name" value="PRK00753.1"/>
    <property type="match status" value="1"/>
</dbReference>
<dbReference type="Pfam" id="PF02419">
    <property type="entry name" value="PsbL"/>
    <property type="match status" value="1"/>
</dbReference>
<dbReference type="SUPFAM" id="SSF161017">
    <property type="entry name" value="Photosystem II reaction center protein L, PsbL"/>
    <property type="match status" value="1"/>
</dbReference>
<organism>
    <name type="scientific">Chlamydomonas moewusii</name>
    <name type="common">Chlamydomonas eugametos</name>
    <dbReference type="NCBI Taxonomy" id="3054"/>
    <lineage>
        <taxon>Eukaryota</taxon>
        <taxon>Viridiplantae</taxon>
        <taxon>Chlorophyta</taxon>
        <taxon>core chlorophytes</taxon>
        <taxon>Chlorophyceae</taxon>
        <taxon>CS clade</taxon>
        <taxon>Chlamydomonadales</taxon>
        <taxon>Chlamydomonadaceae</taxon>
        <taxon>Chlamydomonas</taxon>
    </lineage>
</organism>
<evidence type="ECO:0000255" key="1">
    <source>
        <dbReference type="HAMAP-Rule" id="MF_01317"/>
    </source>
</evidence>
<sequence length="38" mass="4389">MARPNPNKQVVELNRTSLYFGLLLIFVLAVLFSSYIFN</sequence>
<keyword id="KW-0150">Chloroplast</keyword>
<keyword id="KW-0472">Membrane</keyword>
<keyword id="KW-0602">Photosynthesis</keyword>
<keyword id="KW-0604">Photosystem II</keyword>
<keyword id="KW-0934">Plastid</keyword>
<keyword id="KW-0674">Reaction center</keyword>
<keyword id="KW-0793">Thylakoid</keyword>
<keyword id="KW-0812">Transmembrane</keyword>
<keyword id="KW-1133">Transmembrane helix</keyword>
<protein>
    <recommendedName>
        <fullName evidence="1">Photosystem II reaction center protein L</fullName>
        <shortName evidence="1">PSII-L</shortName>
    </recommendedName>
</protein>
<name>PSBL_CHLMO</name>